<gene>
    <name evidence="6" type="primary">ANP32CP</name>
    <name type="synonym">PP32R1</name>
</gene>
<proteinExistence type="uncertain"/>
<accession>O43423</accession>
<accession>Q4W5F9</accession>
<sequence>MEMGRRIHSELRNRAPSDVKELALDNSRSNEGKLEALTDEFEELEFLSKINGGLTSISDLPKLKLRKLELRVSGGLEVLAEKCPNLTHLYLSGNKIKDLSTIEPLKQLENLKSLDLFNCEVTNLNDYGENVFKLLLQLTYLDSCYWDHKEAPYSDIEDHVEGLDDEEEGEHEEEYDEDAQVVEDEEGEEEEEEGEEEDVSGGDEEDEEGYNDGEVDGEEDEEELGEEERGQKRK</sequence>
<organism>
    <name type="scientific">Homo sapiens</name>
    <name type="common">Human</name>
    <dbReference type="NCBI Taxonomy" id="9606"/>
    <lineage>
        <taxon>Eukaryota</taxon>
        <taxon>Metazoa</taxon>
        <taxon>Chordata</taxon>
        <taxon>Craniata</taxon>
        <taxon>Vertebrata</taxon>
        <taxon>Euteleostomi</taxon>
        <taxon>Mammalia</taxon>
        <taxon>Eutheria</taxon>
        <taxon>Euarchontoglires</taxon>
        <taxon>Primates</taxon>
        <taxon>Haplorrhini</taxon>
        <taxon>Catarrhini</taxon>
        <taxon>Hominidae</taxon>
        <taxon>Homo</taxon>
    </lineage>
</organism>
<protein>
    <recommendedName>
        <fullName>Putative uncharacterized protein ANP32CP</fullName>
    </recommendedName>
    <alternativeName>
        <fullName>Acidic leucine-rich nuclear phosphoprotein 32 family member C</fullName>
    </alternativeName>
    <alternativeName>
        <fullName>Phosphoprotein 32-related protein 1</fullName>
    </alternativeName>
    <alternativeName>
        <fullName>Tumorigenic protein pp32r1</fullName>
    </alternativeName>
</protein>
<evidence type="ECO:0000256" key="1">
    <source>
        <dbReference type="SAM" id="MobiDB-lite"/>
    </source>
</evidence>
<evidence type="ECO:0000269" key="2">
    <source>
    </source>
</evidence>
<evidence type="ECO:0000269" key="3">
    <source>
    </source>
</evidence>
<evidence type="ECO:0000305" key="4"/>
<evidence type="ECO:0000305" key="5">
    <source>
    </source>
</evidence>
<evidence type="ECO:0000312" key="6">
    <source>
        <dbReference type="HGNC" id="HGNC:16675"/>
    </source>
</evidence>
<dbReference type="EMBL" id="AF008216">
    <property type="protein sequence ID" value="AAD12746.1"/>
    <property type="molecule type" value="Genomic_DNA"/>
</dbReference>
<dbReference type="EMBL" id="AC105250">
    <property type="protein sequence ID" value="AAY40978.1"/>
    <property type="molecule type" value="Genomic_DNA"/>
</dbReference>
<dbReference type="EMBL" id="CH471056">
    <property type="protein sequence ID" value="EAX04832.1"/>
    <property type="molecule type" value="Genomic_DNA"/>
</dbReference>
<dbReference type="RefSeq" id="NP_036535.1">
    <property type="nucleotide sequence ID" value="NM_012403.1"/>
</dbReference>
<dbReference type="SMR" id="O43423"/>
<dbReference type="BioGRID" id="117067">
    <property type="interactions" value="7"/>
</dbReference>
<dbReference type="FunCoup" id="O43423">
    <property type="interactions" value="70"/>
</dbReference>
<dbReference type="IntAct" id="O43423">
    <property type="interactions" value="4"/>
</dbReference>
<dbReference type="MINT" id="O43423"/>
<dbReference type="iPTMnet" id="O43423"/>
<dbReference type="PhosphoSitePlus" id="O43423"/>
<dbReference type="BioMuta" id="HGNC:16675"/>
<dbReference type="jPOST" id="O43423"/>
<dbReference type="MassIVE" id="O43423"/>
<dbReference type="DNASU" id="23520"/>
<dbReference type="AGR" id="HGNC:16675"/>
<dbReference type="DisGeNET" id="23520"/>
<dbReference type="GeneCards" id="ANP32CP"/>
<dbReference type="HGNC" id="HGNC:16675">
    <property type="gene designation" value="ANP32CP"/>
</dbReference>
<dbReference type="MIM" id="606877">
    <property type="type" value="gene"/>
</dbReference>
<dbReference type="neXtProt" id="NX_O43423"/>
<dbReference type="PharmGKB" id="PA24813"/>
<dbReference type="InParanoid" id="O43423"/>
<dbReference type="PAN-GO" id="O43423">
    <property type="GO annotations" value="5 GO annotations based on evolutionary models"/>
</dbReference>
<dbReference type="PhylomeDB" id="O43423"/>
<dbReference type="PathwayCommons" id="O43423"/>
<dbReference type="SignaLink" id="O43423"/>
<dbReference type="BioGRID-ORCS" id="23520">
    <property type="hits" value="17 hits in 172 CRISPR screens"/>
</dbReference>
<dbReference type="GeneWiki" id="ANP32C"/>
<dbReference type="GenomeRNAi" id="23520"/>
<dbReference type="Pharos" id="O43423">
    <property type="development level" value="Tdark"/>
</dbReference>
<dbReference type="PRO" id="PR:O43423"/>
<dbReference type="Proteomes" id="UP000005640">
    <property type="component" value="Unplaced"/>
</dbReference>
<dbReference type="RNAct" id="O43423">
    <property type="molecule type" value="protein"/>
</dbReference>
<dbReference type="GO" id="GO:0005634">
    <property type="term" value="C:nucleus"/>
    <property type="evidence" value="ECO:0000318"/>
    <property type="project" value="GO_Central"/>
</dbReference>
<dbReference type="GO" id="GO:0048471">
    <property type="term" value="C:perinuclear region of cytoplasm"/>
    <property type="evidence" value="ECO:0000318"/>
    <property type="project" value="GO_Central"/>
</dbReference>
<dbReference type="GO" id="GO:0042393">
    <property type="term" value="F:histone binding"/>
    <property type="evidence" value="ECO:0000318"/>
    <property type="project" value="GO_Central"/>
</dbReference>
<dbReference type="GO" id="GO:0006913">
    <property type="term" value="P:nucleocytoplasmic transport"/>
    <property type="evidence" value="ECO:0000318"/>
    <property type="project" value="GO_Central"/>
</dbReference>
<dbReference type="GO" id="GO:0042981">
    <property type="term" value="P:regulation of apoptotic process"/>
    <property type="evidence" value="ECO:0000318"/>
    <property type="project" value="GO_Central"/>
</dbReference>
<dbReference type="FunFam" id="3.80.10.10:FF:000003">
    <property type="entry name" value="Acidic leucine-rich nuclear phosphoprotein 32 family member A"/>
    <property type="match status" value="1"/>
</dbReference>
<dbReference type="Gene3D" id="3.80.10.10">
    <property type="entry name" value="Ribonuclease Inhibitor"/>
    <property type="match status" value="1"/>
</dbReference>
<dbReference type="InterPro" id="IPR045081">
    <property type="entry name" value="AN32"/>
</dbReference>
<dbReference type="InterPro" id="IPR001611">
    <property type="entry name" value="Leu-rich_rpt"/>
</dbReference>
<dbReference type="InterPro" id="IPR032675">
    <property type="entry name" value="LRR_dom_sf"/>
</dbReference>
<dbReference type="PANTHER" id="PTHR11375">
    <property type="entry name" value="ACIDIC LEUCINE-RICH NUCLEAR PHOSPHOPROTEIN 32"/>
    <property type="match status" value="1"/>
</dbReference>
<dbReference type="PANTHER" id="PTHR11375:SF15">
    <property type="entry name" value="ACIDIC LEUCINE-RICH NUCLEAR PHOSPHOPROTEIN 32 FAMILY MEMBER"/>
    <property type="match status" value="1"/>
</dbReference>
<dbReference type="Pfam" id="PF14580">
    <property type="entry name" value="LRR_9"/>
    <property type="match status" value="1"/>
</dbReference>
<dbReference type="SUPFAM" id="SSF52058">
    <property type="entry name" value="L domain-like"/>
    <property type="match status" value="1"/>
</dbReference>
<dbReference type="PROSITE" id="PS51450">
    <property type="entry name" value="LRR"/>
    <property type="match status" value="3"/>
</dbReference>
<reference key="1">
    <citation type="journal article" date="1999" name="Nat. Med.">
        <title>Modulation of oncogenic potential by alternative gene use in human prostate cancer.</title>
        <authorList>
            <person name="Kadkol S.S."/>
            <person name="Brody J.R."/>
            <person name="Pevsner J."/>
            <person name="Bai J."/>
            <person name="Pasternack G.R."/>
        </authorList>
    </citation>
    <scope>NUCLEOTIDE SEQUENCE [GENOMIC DNA]</scope>
    <scope>TISSUE SPECIFICITY</scope>
</reference>
<reference key="2">
    <citation type="journal article" date="1999" name="Nat. Med.">
        <authorList>
            <person name="Kadkol S.S."/>
            <person name="Brody J.R."/>
            <person name="Pevsner J."/>
            <person name="Bai J."/>
            <person name="Pasternack G.R."/>
        </authorList>
    </citation>
    <scope>ERRATUM OF PUBMED:10086381</scope>
</reference>
<reference key="3">
    <citation type="journal article" date="2005" name="Nature">
        <title>Generation and annotation of the DNA sequences of human chromosomes 2 and 4.</title>
        <authorList>
            <person name="Hillier L.W."/>
            <person name="Graves T.A."/>
            <person name="Fulton R.S."/>
            <person name="Fulton L.A."/>
            <person name="Pepin K.H."/>
            <person name="Minx P."/>
            <person name="Wagner-McPherson C."/>
            <person name="Layman D."/>
            <person name="Wylie K."/>
            <person name="Sekhon M."/>
            <person name="Becker M.C."/>
            <person name="Fewell G.A."/>
            <person name="Delehaunty K.D."/>
            <person name="Miner T.L."/>
            <person name="Nash W.E."/>
            <person name="Kremitzki C."/>
            <person name="Oddy L."/>
            <person name="Du H."/>
            <person name="Sun H."/>
            <person name="Bradshaw-Cordum H."/>
            <person name="Ali J."/>
            <person name="Carter J."/>
            <person name="Cordes M."/>
            <person name="Harris A."/>
            <person name="Isak A."/>
            <person name="van Brunt A."/>
            <person name="Nguyen C."/>
            <person name="Du F."/>
            <person name="Courtney L."/>
            <person name="Kalicki J."/>
            <person name="Ozersky P."/>
            <person name="Abbott S."/>
            <person name="Armstrong J."/>
            <person name="Belter E.A."/>
            <person name="Caruso L."/>
            <person name="Cedroni M."/>
            <person name="Cotton M."/>
            <person name="Davidson T."/>
            <person name="Desai A."/>
            <person name="Elliott G."/>
            <person name="Erb T."/>
            <person name="Fronick C."/>
            <person name="Gaige T."/>
            <person name="Haakenson W."/>
            <person name="Haglund K."/>
            <person name="Holmes A."/>
            <person name="Harkins R."/>
            <person name="Kim K."/>
            <person name="Kruchowski S.S."/>
            <person name="Strong C.M."/>
            <person name="Grewal N."/>
            <person name="Goyea E."/>
            <person name="Hou S."/>
            <person name="Levy A."/>
            <person name="Martinka S."/>
            <person name="Mead K."/>
            <person name="McLellan M.D."/>
            <person name="Meyer R."/>
            <person name="Randall-Maher J."/>
            <person name="Tomlinson C."/>
            <person name="Dauphin-Kohlberg S."/>
            <person name="Kozlowicz-Reilly A."/>
            <person name="Shah N."/>
            <person name="Swearengen-Shahid S."/>
            <person name="Snider J."/>
            <person name="Strong J.T."/>
            <person name="Thompson J."/>
            <person name="Yoakum M."/>
            <person name="Leonard S."/>
            <person name="Pearman C."/>
            <person name="Trani L."/>
            <person name="Radionenko M."/>
            <person name="Waligorski J.E."/>
            <person name="Wang C."/>
            <person name="Rock S.M."/>
            <person name="Tin-Wollam A.-M."/>
            <person name="Maupin R."/>
            <person name="Latreille P."/>
            <person name="Wendl M.C."/>
            <person name="Yang S.-P."/>
            <person name="Pohl C."/>
            <person name="Wallis J.W."/>
            <person name="Spieth J."/>
            <person name="Bieri T.A."/>
            <person name="Berkowicz N."/>
            <person name="Nelson J.O."/>
            <person name="Osborne J."/>
            <person name="Ding L."/>
            <person name="Meyer R."/>
            <person name="Sabo A."/>
            <person name="Shotland Y."/>
            <person name="Sinha P."/>
            <person name="Wohldmann P.E."/>
            <person name="Cook L.L."/>
            <person name="Hickenbotham M.T."/>
            <person name="Eldred J."/>
            <person name="Williams D."/>
            <person name="Jones T.A."/>
            <person name="She X."/>
            <person name="Ciccarelli F.D."/>
            <person name="Izaurralde E."/>
            <person name="Taylor J."/>
            <person name="Schmutz J."/>
            <person name="Myers R.M."/>
            <person name="Cox D.R."/>
            <person name="Huang X."/>
            <person name="McPherson J.D."/>
            <person name="Mardis E.R."/>
            <person name="Clifton S.W."/>
            <person name="Warren W.C."/>
            <person name="Chinwalla A.T."/>
            <person name="Eddy S.R."/>
            <person name="Marra M.A."/>
            <person name="Ovcharenko I."/>
            <person name="Furey T.S."/>
            <person name="Miller W."/>
            <person name="Eichler E.E."/>
            <person name="Bork P."/>
            <person name="Suyama M."/>
            <person name="Torrents D."/>
            <person name="Waterston R.H."/>
            <person name="Wilson R.K."/>
        </authorList>
    </citation>
    <scope>NUCLEOTIDE SEQUENCE [LARGE SCALE GENOMIC DNA]</scope>
</reference>
<reference key="4">
    <citation type="submission" date="2005-09" db="EMBL/GenBank/DDBJ databases">
        <authorList>
            <person name="Mural R.J."/>
            <person name="Istrail S."/>
            <person name="Sutton G.G."/>
            <person name="Florea L."/>
            <person name="Halpern A.L."/>
            <person name="Mobarry C.M."/>
            <person name="Lippert R."/>
            <person name="Walenz B."/>
            <person name="Shatkay H."/>
            <person name="Dew I."/>
            <person name="Miller J.R."/>
            <person name="Flanigan M.J."/>
            <person name="Edwards N.J."/>
            <person name="Bolanos R."/>
            <person name="Fasulo D."/>
            <person name="Halldorsson B.V."/>
            <person name="Hannenhalli S."/>
            <person name="Turner R."/>
            <person name="Yooseph S."/>
            <person name="Lu F."/>
            <person name="Nusskern D.R."/>
            <person name="Shue B.C."/>
            <person name="Zheng X.H."/>
            <person name="Zhong F."/>
            <person name="Delcher A.L."/>
            <person name="Huson D.H."/>
            <person name="Kravitz S.A."/>
            <person name="Mouchard L."/>
            <person name="Reinert K."/>
            <person name="Remington K.A."/>
            <person name="Clark A.G."/>
            <person name="Waterman M.S."/>
            <person name="Eichler E.E."/>
            <person name="Adams M.D."/>
            <person name="Hunkapiller M.W."/>
            <person name="Myers E.W."/>
            <person name="Venter J.C."/>
        </authorList>
    </citation>
    <scope>NUCLEOTIDE SEQUENCE [LARGE SCALE GENOMIC DNA]</scope>
</reference>
<reference key="5">
    <citation type="journal article" date="2004" name="Hum. Mutat.">
        <title>Identification of a functional mutation in pp32r1 (ANP32C).</title>
        <authorList>
            <person name="Kochevar G.J."/>
            <person name="Brody J.R."/>
            <person name="Kadkol S.S."/>
            <person name="Murphy K.M."/>
            <person name="Pasternack G.R."/>
        </authorList>
    </citation>
    <scope>VARIANTS VAL-23; LYS-71 AND HIS-140</scope>
    <scope>TISSUE SPECIFICITY</scope>
</reference>
<reference key="6">
    <citation type="journal article" date="2005" name="Cerebellum">
        <title>The Anp32 family of proteins containing leucine-rich repeats.</title>
        <authorList>
            <person name="Matilla A."/>
            <person name="Radrizzani M."/>
        </authorList>
    </citation>
    <scope>GENE FAMILY</scope>
    <scope>NOMENCLATURE</scope>
</reference>
<name>AN32C_HUMAN</name>
<feature type="chain" id="PRO_0000137597" description="Putative uncharacterized protein ANP32CP">
    <location>
        <begin position="1"/>
        <end position="234"/>
    </location>
</feature>
<feature type="repeat" description="LRR 1">
    <location>
        <begin position="44"/>
        <end position="63"/>
    </location>
</feature>
<feature type="repeat" description="LRR 2">
    <location>
        <begin position="64"/>
        <end position="84"/>
    </location>
</feature>
<feature type="repeat" description="LRR 3">
    <location>
        <begin position="85"/>
        <end position="107"/>
    </location>
</feature>
<feature type="repeat" description="LRR 4">
    <location>
        <begin position="111"/>
        <end position="134"/>
    </location>
</feature>
<feature type="region of interest" description="Disordered" evidence="1">
    <location>
        <begin position="161"/>
        <end position="234"/>
    </location>
</feature>
<feature type="compositionally biased region" description="Acidic residues" evidence="1">
    <location>
        <begin position="163"/>
        <end position="226"/>
    </location>
</feature>
<feature type="sequence variant" id="VAR_026702" description="In dbSNP:rs2288674." evidence="3">
    <original>A</original>
    <variation>V</variation>
    <location>
        <position position="23"/>
    </location>
</feature>
<feature type="sequence variant" id="VAR_020419" description="In dbSNP:rs2288675." evidence="3">
    <original>R</original>
    <variation>K</variation>
    <location>
        <position position="71"/>
    </location>
</feature>
<feature type="sequence variant" id="VAR_048314" description="In dbSNP:rs17008716.">
    <original>L</original>
    <variation>P</variation>
    <location>
        <position position="105"/>
    </location>
</feature>
<feature type="sequence variant" id="VAR_026703" description="In dbSNP:rs76372915." evidence="3">
    <original>Y</original>
    <variation>H</variation>
    <location>
        <position position="140"/>
    </location>
</feature>
<feature type="sequence variant" id="VAR_020420" description="In dbSNP:rs2288676.">
    <original>E</original>
    <variation>G</variation>
    <location>
        <position position="204"/>
    </location>
</feature>
<comment type="tissue specificity">
    <text evidence="2 3">Expressed in activated stem cells, such as mobilized CD34+ cells and cord blood CD34+ cells, but not in resting bone marrow CD34+ cells. Expressed in a variety of neoplastic cell lines, mainly in prostatic adenocarcinoma cell lines. Not expressed in normal prostatic tissue.</text>
</comment>
<comment type="similarity">
    <text evidence="4">Belongs to the ANP32 family.</text>
</comment>
<comment type="caution">
    <text evidence="5">Could be the product of a pseudogene. Gene encoding ANP32CP is intronless suggesting that is pseudogene generated by retrotransposition. There is no evidence for transcription.</text>
</comment>
<keyword id="KW-0433">Leucine-rich repeat</keyword>
<keyword id="KW-1267">Proteomics identification</keyword>
<keyword id="KW-1185">Reference proteome</keyword>
<keyword id="KW-0677">Repeat</keyword>